<feature type="chain" id="PRO_1000202384" description="4-diphosphocytidyl-2-C-methyl-D-erythritol kinase">
    <location>
        <begin position="1"/>
        <end position="290"/>
    </location>
</feature>
<feature type="active site" evidence="1">
    <location>
        <position position="14"/>
    </location>
</feature>
<feature type="active site" evidence="1">
    <location>
        <position position="145"/>
    </location>
</feature>
<feature type="binding site" evidence="1">
    <location>
        <begin position="103"/>
        <end position="113"/>
    </location>
    <ligand>
        <name>ATP</name>
        <dbReference type="ChEBI" id="CHEBI:30616"/>
    </ligand>
</feature>
<proteinExistence type="inferred from homology"/>
<dbReference type="EC" id="2.7.1.148" evidence="1"/>
<dbReference type="EMBL" id="CP001657">
    <property type="protein sequence ID" value="ACT13157.1"/>
    <property type="molecule type" value="Genomic_DNA"/>
</dbReference>
<dbReference type="RefSeq" id="WP_015840348.1">
    <property type="nucleotide sequence ID" value="NC_012917.1"/>
</dbReference>
<dbReference type="SMR" id="C6DHY4"/>
<dbReference type="STRING" id="561230.PC1_2117"/>
<dbReference type="KEGG" id="pct:PC1_2117"/>
<dbReference type="eggNOG" id="COG1947">
    <property type="taxonomic scope" value="Bacteria"/>
</dbReference>
<dbReference type="HOGENOM" id="CLU_053057_3_0_6"/>
<dbReference type="OrthoDB" id="9809438at2"/>
<dbReference type="UniPathway" id="UPA00056">
    <property type="reaction ID" value="UER00094"/>
</dbReference>
<dbReference type="Proteomes" id="UP000002736">
    <property type="component" value="Chromosome"/>
</dbReference>
<dbReference type="GO" id="GO:0050515">
    <property type="term" value="F:4-(cytidine 5'-diphospho)-2-C-methyl-D-erythritol kinase activity"/>
    <property type="evidence" value="ECO:0007669"/>
    <property type="project" value="UniProtKB-UniRule"/>
</dbReference>
<dbReference type="GO" id="GO:0005524">
    <property type="term" value="F:ATP binding"/>
    <property type="evidence" value="ECO:0007669"/>
    <property type="project" value="UniProtKB-UniRule"/>
</dbReference>
<dbReference type="GO" id="GO:0019288">
    <property type="term" value="P:isopentenyl diphosphate biosynthetic process, methylerythritol 4-phosphate pathway"/>
    <property type="evidence" value="ECO:0007669"/>
    <property type="project" value="UniProtKB-UniRule"/>
</dbReference>
<dbReference type="GO" id="GO:0016114">
    <property type="term" value="P:terpenoid biosynthetic process"/>
    <property type="evidence" value="ECO:0007669"/>
    <property type="project" value="InterPro"/>
</dbReference>
<dbReference type="FunFam" id="3.30.230.10:FF:000022">
    <property type="entry name" value="4-diphosphocytidyl-2-C-methyl-D-erythritol kinase"/>
    <property type="match status" value="1"/>
</dbReference>
<dbReference type="FunFam" id="3.30.70.890:FF:000004">
    <property type="entry name" value="4-diphosphocytidyl-2-C-methyl-D-erythritol kinase"/>
    <property type="match status" value="1"/>
</dbReference>
<dbReference type="Gene3D" id="3.30.230.10">
    <property type="match status" value="1"/>
</dbReference>
<dbReference type="Gene3D" id="3.30.70.890">
    <property type="entry name" value="GHMP kinase, C-terminal domain"/>
    <property type="match status" value="1"/>
</dbReference>
<dbReference type="HAMAP" id="MF_00061">
    <property type="entry name" value="IspE"/>
    <property type="match status" value="1"/>
</dbReference>
<dbReference type="InterPro" id="IPR013750">
    <property type="entry name" value="GHMP_kinase_C_dom"/>
</dbReference>
<dbReference type="InterPro" id="IPR036554">
    <property type="entry name" value="GHMP_kinase_C_sf"/>
</dbReference>
<dbReference type="InterPro" id="IPR006204">
    <property type="entry name" value="GHMP_kinase_N_dom"/>
</dbReference>
<dbReference type="InterPro" id="IPR004424">
    <property type="entry name" value="IspE"/>
</dbReference>
<dbReference type="InterPro" id="IPR020568">
    <property type="entry name" value="Ribosomal_Su5_D2-typ_SF"/>
</dbReference>
<dbReference type="InterPro" id="IPR014721">
    <property type="entry name" value="Ribsml_uS5_D2-typ_fold_subgr"/>
</dbReference>
<dbReference type="NCBIfam" id="TIGR00154">
    <property type="entry name" value="ispE"/>
    <property type="match status" value="1"/>
</dbReference>
<dbReference type="PANTHER" id="PTHR43527">
    <property type="entry name" value="4-DIPHOSPHOCYTIDYL-2-C-METHYL-D-ERYTHRITOL KINASE, CHLOROPLASTIC"/>
    <property type="match status" value="1"/>
</dbReference>
<dbReference type="PANTHER" id="PTHR43527:SF2">
    <property type="entry name" value="4-DIPHOSPHOCYTIDYL-2-C-METHYL-D-ERYTHRITOL KINASE, CHLOROPLASTIC"/>
    <property type="match status" value="1"/>
</dbReference>
<dbReference type="Pfam" id="PF08544">
    <property type="entry name" value="GHMP_kinases_C"/>
    <property type="match status" value="1"/>
</dbReference>
<dbReference type="Pfam" id="PF00288">
    <property type="entry name" value="GHMP_kinases_N"/>
    <property type="match status" value="1"/>
</dbReference>
<dbReference type="PIRSF" id="PIRSF010376">
    <property type="entry name" value="IspE"/>
    <property type="match status" value="1"/>
</dbReference>
<dbReference type="SUPFAM" id="SSF55060">
    <property type="entry name" value="GHMP Kinase, C-terminal domain"/>
    <property type="match status" value="1"/>
</dbReference>
<dbReference type="SUPFAM" id="SSF54211">
    <property type="entry name" value="Ribosomal protein S5 domain 2-like"/>
    <property type="match status" value="1"/>
</dbReference>
<organism>
    <name type="scientific">Pectobacterium carotovorum subsp. carotovorum (strain PC1)</name>
    <dbReference type="NCBI Taxonomy" id="561230"/>
    <lineage>
        <taxon>Bacteria</taxon>
        <taxon>Pseudomonadati</taxon>
        <taxon>Pseudomonadota</taxon>
        <taxon>Gammaproteobacteria</taxon>
        <taxon>Enterobacterales</taxon>
        <taxon>Pectobacteriaceae</taxon>
        <taxon>Pectobacterium</taxon>
    </lineage>
</organism>
<sequence>MQPTVIETWPAPAKLNLFLYITGQRQDGYHLLQTLFQFLDYGDTLTIQPRDDDQINLLTPVDGVENEQNLIVRAARLLQQHCKRHNIHPAQFGADIRIDKYLPMGGGLGGGSSNAATVLVALNHLWKSGLSVDTLADLGLQLGADVPVFVRGHAAFAEGIGERLTPANPPEKWYLVAHPGVSIATPLIFGDPELTRNSPVRDLETLLNQTFVNDCEAIARKRFREVEQLLSWLLEYAPARLTGTGACVFAEFDTEFAARQVLDQAPEWLNGFVARGVNVSPLQRTLSGQL</sequence>
<accession>C6DHY4</accession>
<protein>
    <recommendedName>
        <fullName evidence="1">4-diphosphocytidyl-2-C-methyl-D-erythritol kinase</fullName>
        <shortName evidence="1">CMK</shortName>
        <ecNumber evidence="1">2.7.1.148</ecNumber>
    </recommendedName>
    <alternativeName>
        <fullName evidence="1">4-(cytidine-5'-diphospho)-2-C-methyl-D-erythritol kinase</fullName>
    </alternativeName>
</protein>
<reference key="1">
    <citation type="submission" date="2009-07" db="EMBL/GenBank/DDBJ databases">
        <title>Complete sequence of Pectobacterium carotovorum subsp. carotovorum PC1.</title>
        <authorList>
            <consortium name="US DOE Joint Genome Institute"/>
            <person name="Lucas S."/>
            <person name="Copeland A."/>
            <person name="Lapidus A."/>
            <person name="Glavina del Rio T."/>
            <person name="Tice H."/>
            <person name="Bruce D."/>
            <person name="Goodwin L."/>
            <person name="Pitluck S."/>
            <person name="Munk A.C."/>
            <person name="Brettin T."/>
            <person name="Detter J.C."/>
            <person name="Han C."/>
            <person name="Tapia R."/>
            <person name="Larimer F."/>
            <person name="Land M."/>
            <person name="Hauser L."/>
            <person name="Kyrpides N."/>
            <person name="Mikhailova N."/>
            <person name="Balakrishnan V."/>
            <person name="Glasner J."/>
            <person name="Perna N.T."/>
        </authorList>
    </citation>
    <scope>NUCLEOTIDE SEQUENCE [LARGE SCALE GENOMIC DNA]</scope>
    <source>
        <strain>PC1</strain>
    </source>
</reference>
<comment type="function">
    <text evidence="1">Catalyzes the phosphorylation of the position 2 hydroxy group of 4-diphosphocytidyl-2C-methyl-D-erythritol.</text>
</comment>
<comment type="catalytic activity">
    <reaction evidence="1">
        <text>4-CDP-2-C-methyl-D-erythritol + ATP = 4-CDP-2-C-methyl-D-erythritol 2-phosphate + ADP + H(+)</text>
        <dbReference type="Rhea" id="RHEA:18437"/>
        <dbReference type="ChEBI" id="CHEBI:15378"/>
        <dbReference type="ChEBI" id="CHEBI:30616"/>
        <dbReference type="ChEBI" id="CHEBI:57823"/>
        <dbReference type="ChEBI" id="CHEBI:57919"/>
        <dbReference type="ChEBI" id="CHEBI:456216"/>
        <dbReference type="EC" id="2.7.1.148"/>
    </reaction>
</comment>
<comment type="pathway">
    <text evidence="1">Isoprenoid biosynthesis; isopentenyl diphosphate biosynthesis via DXP pathway; isopentenyl diphosphate from 1-deoxy-D-xylulose 5-phosphate: step 3/6.</text>
</comment>
<comment type="subunit">
    <text evidence="1">Homodimer.</text>
</comment>
<comment type="similarity">
    <text evidence="1">Belongs to the GHMP kinase family. IspE subfamily.</text>
</comment>
<keyword id="KW-0067">ATP-binding</keyword>
<keyword id="KW-0414">Isoprene biosynthesis</keyword>
<keyword id="KW-0418">Kinase</keyword>
<keyword id="KW-0547">Nucleotide-binding</keyword>
<keyword id="KW-0808">Transferase</keyword>
<name>ISPE_PECCP</name>
<evidence type="ECO:0000255" key="1">
    <source>
        <dbReference type="HAMAP-Rule" id="MF_00061"/>
    </source>
</evidence>
<gene>
    <name evidence="1" type="primary">ispE</name>
    <name type="ordered locus">PC1_2117</name>
</gene>